<organism>
    <name type="scientific">Saccharomyces cerevisiae (strain ATCC 204508 / S288c)</name>
    <name type="common">Baker's yeast</name>
    <dbReference type="NCBI Taxonomy" id="559292"/>
    <lineage>
        <taxon>Eukaryota</taxon>
        <taxon>Fungi</taxon>
        <taxon>Dikarya</taxon>
        <taxon>Ascomycota</taxon>
        <taxon>Saccharomycotina</taxon>
        <taxon>Saccharomycetes</taxon>
        <taxon>Saccharomycetales</taxon>
        <taxon>Saccharomycetaceae</taxon>
        <taxon>Saccharomyces</taxon>
    </lineage>
</organism>
<dbReference type="EMBL" id="U31900">
    <property type="status" value="NOT_ANNOTATED_CDS"/>
    <property type="molecule type" value="Genomic_DNA"/>
</dbReference>
<dbReference type="EMBL" id="Z48951">
    <property type="status" value="NOT_ANNOTATED_CDS"/>
    <property type="molecule type" value="Genomic_DNA"/>
</dbReference>
<dbReference type="EMBL" id="Z71255">
    <property type="status" value="NOT_ANNOTATED_CDS"/>
    <property type="molecule type" value="Genomic_DNA"/>
</dbReference>
<dbReference type="EMBL" id="AY693323">
    <property type="protein sequence ID" value="AAT93342.1"/>
    <property type="molecule type" value="Genomic_DNA"/>
</dbReference>
<dbReference type="PaxDb" id="4932-YPR002C-A"/>
<dbReference type="EnsemblFungi" id="YPR002C-A_mRNA">
    <property type="protein sequence ID" value="YPR002C-A"/>
    <property type="gene ID" value="YPR002C-A"/>
</dbReference>
<dbReference type="AGR" id="SGD:S000007254"/>
<dbReference type="SGD" id="S000007254">
    <property type="gene designation" value="YPR002C-A"/>
</dbReference>
<dbReference type="GeneTree" id="ENSGT00940000177947"/>
<dbReference type="HOGENOM" id="CLU_168474_0_0_1"/>
<dbReference type="ChiTaRS" id="YPR002C-A">
    <property type="organism name" value="yeast"/>
</dbReference>
<protein>
    <recommendedName>
        <fullName>Putative uncharacterized protein YPR002C-A</fullName>
    </recommendedName>
</protein>
<proteinExistence type="uncertain"/>
<accession>Q6B0V7</accession>
<feature type="chain" id="PRO_0000299755" description="Putative uncharacterized protein YPR002C-A">
    <location>
        <begin position="1"/>
        <end position="65"/>
    </location>
</feature>
<feature type="sequence conflict" description="In Ref. 3; AAT93342." evidence="1" ref="3">
    <original>N</original>
    <variation>I</variation>
    <location>
        <position position="35"/>
    </location>
</feature>
<comment type="caution">
    <text evidence="2">Product of a dubious gene prediction unlikely to encode a functional protein. Because of that it is not part of the S.cerevisiae S288c complete/reference proteome set.</text>
</comment>
<reference key="1">
    <citation type="journal article" date="1997" name="Nature">
        <title>The nucleotide sequence of Saccharomyces cerevisiae chromosome XVI.</title>
        <authorList>
            <person name="Bussey H."/>
            <person name="Storms R.K."/>
            <person name="Ahmed A."/>
            <person name="Albermann K."/>
            <person name="Allen E."/>
            <person name="Ansorge W."/>
            <person name="Araujo R."/>
            <person name="Aparicio A."/>
            <person name="Barrell B.G."/>
            <person name="Badcock K."/>
            <person name="Benes V."/>
            <person name="Botstein D."/>
            <person name="Bowman S."/>
            <person name="Brueckner M."/>
            <person name="Carpenter J."/>
            <person name="Cherry J.M."/>
            <person name="Chung E."/>
            <person name="Churcher C.M."/>
            <person name="Coster F."/>
            <person name="Davis K."/>
            <person name="Davis R.W."/>
            <person name="Dietrich F.S."/>
            <person name="Delius H."/>
            <person name="DiPaolo T."/>
            <person name="Dubois E."/>
            <person name="Duesterhoeft A."/>
            <person name="Duncan M."/>
            <person name="Floeth M."/>
            <person name="Fortin N."/>
            <person name="Friesen J.D."/>
            <person name="Fritz C."/>
            <person name="Goffeau A."/>
            <person name="Hall J."/>
            <person name="Hebling U."/>
            <person name="Heumann K."/>
            <person name="Hilbert H."/>
            <person name="Hillier L.W."/>
            <person name="Hunicke-Smith S."/>
            <person name="Hyman R.W."/>
            <person name="Johnston M."/>
            <person name="Kalman S."/>
            <person name="Kleine K."/>
            <person name="Komp C."/>
            <person name="Kurdi O."/>
            <person name="Lashkari D."/>
            <person name="Lew H."/>
            <person name="Lin A."/>
            <person name="Lin D."/>
            <person name="Louis E.J."/>
            <person name="Marathe R."/>
            <person name="Messenguy F."/>
            <person name="Mewes H.-W."/>
            <person name="Mirtipati S."/>
            <person name="Moestl D."/>
            <person name="Mueller-Auer S."/>
            <person name="Namath A."/>
            <person name="Nentwich U."/>
            <person name="Oefner P."/>
            <person name="Pearson D."/>
            <person name="Petel F.X."/>
            <person name="Pohl T.M."/>
            <person name="Purnelle B."/>
            <person name="Rajandream M.A."/>
            <person name="Rechmann S."/>
            <person name="Rieger M."/>
            <person name="Riles L."/>
            <person name="Roberts D."/>
            <person name="Schaefer M."/>
            <person name="Scharfe M."/>
            <person name="Scherens B."/>
            <person name="Schramm S."/>
            <person name="Schroeder M."/>
            <person name="Sdicu A.-M."/>
            <person name="Tettelin H."/>
            <person name="Urrestarazu L.A."/>
            <person name="Ushinsky S."/>
            <person name="Vierendeels F."/>
            <person name="Vissers S."/>
            <person name="Voss H."/>
            <person name="Walsh S.V."/>
            <person name="Wambutt R."/>
            <person name="Wang Y."/>
            <person name="Wedler E."/>
            <person name="Wedler H."/>
            <person name="Winnett E."/>
            <person name="Zhong W.-W."/>
            <person name="Zollner A."/>
            <person name="Vo D.H."/>
            <person name="Hani J."/>
        </authorList>
    </citation>
    <scope>NUCLEOTIDE SEQUENCE [LARGE SCALE GENOMIC DNA]</scope>
    <source>
        <strain>ATCC 204508 / S288c</strain>
    </source>
</reference>
<reference key="2">
    <citation type="journal article" date="2014" name="G3 (Bethesda)">
        <title>The reference genome sequence of Saccharomyces cerevisiae: Then and now.</title>
        <authorList>
            <person name="Engel S.R."/>
            <person name="Dietrich F.S."/>
            <person name="Fisk D.G."/>
            <person name="Binkley G."/>
            <person name="Balakrishnan R."/>
            <person name="Costanzo M.C."/>
            <person name="Dwight S.S."/>
            <person name="Hitz B.C."/>
            <person name="Karra K."/>
            <person name="Nash R.S."/>
            <person name="Weng S."/>
            <person name="Wong E.D."/>
            <person name="Lloyd P."/>
            <person name="Skrzypek M.S."/>
            <person name="Miyasato S.R."/>
            <person name="Simison M."/>
            <person name="Cherry J.M."/>
        </authorList>
    </citation>
    <scope>GENOME REANNOTATION</scope>
    <source>
        <strain>ATCC 204508 / S288c</strain>
    </source>
</reference>
<reference key="3">
    <citation type="journal article" date="2007" name="Genome Res.">
        <title>Approaching a complete repository of sequence-verified protein-encoding clones for Saccharomyces cerevisiae.</title>
        <authorList>
            <person name="Hu Y."/>
            <person name="Rolfs A."/>
            <person name="Bhullar B."/>
            <person name="Murthy T.V.S."/>
            <person name="Zhu C."/>
            <person name="Berger M.F."/>
            <person name="Camargo A.A."/>
            <person name="Kelley F."/>
            <person name="McCarron S."/>
            <person name="Jepson D."/>
            <person name="Richardson A."/>
            <person name="Raphael J."/>
            <person name="Moreira D."/>
            <person name="Taycher E."/>
            <person name="Zuo D."/>
            <person name="Mohr S."/>
            <person name="Kane M.F."/>
            <person name="Williamson J."/>
            <person name="Simpson A.J.G."/>
            <person name="Bulyk M.L."/>
            <person name="Harlow E."/>
            <person name="Marsischky G."/>
            <person name="Kolodner R.D."/>
            <person name="LaBaer J."/>
        </authorList>
    </citation>
    <scope>NUCLEOTIDE SEQUENCE [GENOMIC DNA]</scope>
    <source>
        <strain>ATCC 204508 / S288c</strain>
    </source>
</reference>
<name>YPR02_YEAST</name>
<evidence type="ECO:0000305" key="1"/>
<evidence type="ECO:0000305" key="2">
    <source>
    </source>
</evidence>
<gene>
    <name type="ordered locus">YPR002C-A</name>
</gene>
<sequence length="65" mass="7227">MKAIILGIQNILEVLLEDIGILKMESIFLHTNITNIPHSVLYVSLSYYIINPCTSASSNLDDSFS</sequence>